<dbReference type="EMBL" id="CP000438">
    <property type="protein sequence ID" value="ABJ13525.1"/>
    <property type="molecule type" value="Genomic_DNA"/>
</dbReference>
<dbReference type="RefSeq" id="WP_003093717.1">
    <property type="nucleotide sequence ID" value="NZ_CP034244.1"/>
</dbReference>
<dbReference type="SMR" id="Q02T71"/>
<dbReference type="GeneID" id="77219207"/>
<dbReference type="KEGG" id="pau:PA14_08940"/>
<dbReference type="PseudoCAP" id="PA14_08940"/>
<dbReference type="HOGENOM" id="CLU_073626_1_1_6"/>
<dbReference type="BioCyc" id="PAER208963:G1G74-745-MONOMER"/>
<dbReference type="Proteomes" id="UP000000653">
    <property type="component" value="Chromosome"/>
</dbReference>
<dbReference type="GO" id="GO:0022627">
    <property type="term" value="C:cytosolic small ribosomal subunit"/>
    <property type="evidence" value="ECO:0007669"/>
    <property type="project" value="TreeGrafter"/>
</dbReference>
<dbReference type="GO" id="GO:0019843">
    <property type="term" value="F:rRNA binding"/>
    <property type="evidence" value="ECO:0007669"/>
    <property type="project" value="UniProtKB-UniRule"/>
</dbReference>
<dbReference type="GO" id="GO:0003735">
    <property type="term" value="F:structural constituent of ribosome"/>
    <property type="evidence" value="ECO:0007669"/>
    <property type="project" value="InterPro"/>
</dbReference>
<dbReference type="GO" id="GO:0006412">
    <property type="term" value="P:translation"/>
    <property type="evidence" value="ECO:0007669"/>
    <property type="project" value="UniProtKB-UniRule"/>
</dbReference>
<dbReference type="CDD" id="cd00364">
    <property type="entry name" value="Ribosomal_uS17"/>
    <property type="match status" value="1"/>
</dbReference>
<dbReference type="FunFam" id="2.40.50.140:FF:000014">
    <property type="entry name" value="30S ribosomal protein S17"/>
    <property type="match status" value="1"/>
</dbReference>
<dbReference type="Gene3D" id="2.40.50.140">
    <property type="entry name" value="Nucleic acid-binding proteins"/>
    <property type="match status" value="1"/>
</dbReference>
<dbReference type="HAMAP" id="MF_01345_B">
    <property type="entry name" value="Ribosomal_uS17_B"/>
    <property type="match status" value="1"/>
</dbReference>
<dbReference type="InterPro" id="IPR012340">
    <property type="entry name" value="NA-bd_OB-fold"/>
</dbReference>
<dbReference type="InterPro" id="IPR000266">
    <property type="entry name" value="Ribosomal_uS17"/>
</dbReference>
<dbReference type="InterPro" id="IPR019984">
    <property type="entry name" value="Ribosomal_uS17_bact/chlr"/>
</dbReference>
<dbReference type="NCBIfam" id="NF004123">
    <property type="entry name" value="PRK05610.1"/>
    <property type="match status" value="1"/>
</dbReference>
<dbReference type="NCBIfam" id="TIGR03635">
    <property type="entry name" value="uS17_bact"/>
    <property type="match status" value="1"/>
</dbReference>
<dbReference type="PANTHER" id="PTHR10744">
    <property type="entry name" value="40S RIBOSOMAL PROTEIN S11 FAMILY MEMBER"/>
    <property type="match status" value="1"/>
</dbReference>
<dbReference type="PANTHER" id="PTHR10744:SF1">
    <property type="entry name" value="SMALL RIBOSOMAL SUBUNIT PROTEIN US17M"/>
    <property type="match status" value="1"/>
</dbReference>
<dbReference type="Pfam" id="PF00366">
    <property type="entry name" value="Ribosomal_S17"/>
    <property type="match status" value="1"/>
</dbReference>
<dbReference type="PRINTS" id="PR00973">
    <property type="entry name" value="RIBOSOMALS17"/>
</dbReference>
<dbReference type="SUPFAM" id="SSF50249">
    <property type="entry name" value="Nucleic acid-binding proteins"/>
    <property type="match status" value="1"/>
</dbReference>
<protein>
    <recommendedName>
        <fullName evidence="1">Small ribosomal subunit protein uS17</fullName>
    </recommendedName>
    <alternativeName>
        <fullName evidence="2">30S ribosomal protein S17</fullName>
    </alternativeName>
</protein>
<organism>
    <name type="scientific">Pseudomonas aeruginosa (strain UCBPP-PA14)</name>
    <dbReference type="NCBI Taxonomy" id="208963"/>
    <lineage>
        <taxon>Bacteria</taxon>
        <taxon>Pseudomonadati</taxon>
        <taxon>Pseudomonadota</taxon>
        <taxon>Gammaproteobacteria</taxon>
        <taxon>Pseudomonadales</taxon>
        <taxon>Pseudomonadaceae</taxon>
        <taxon>Pseudomonas</taxon>
    </lineage>
</organism>
<evidence type="ECO:0000255" key="1">
    <source>
        <dbReference type="HAMAP-Rule" id="MF_01345"/>
    </source>
</evidence>
<evidence type="ECO:0000305" key="2"/>
<reference key="1">
    <citation type="journal article" date="2006" name="Genome Biol.">
        <title>Genomic analysis reveals that Pseudomonas aeruginosa virulence is combinatorial.</title>
        <authorList>
            <person name="Lee D.G."/>
            <person name="Urbach J.M."/>
            <person name="Wu G."/>
            <person name="Liberati N.T."/>
            <person name="Feinbaum R.L."/>
            <person name="Miyata S."/>
            <person name="Diggins L.T."/>
            <person name="He J."/>
            <person name="Saucier M."/>
            <person name="Deziel E."/>
            <person name="Friedman L."/>
            <person name="Li L."/>
            <person name="Grills G."/>
            <person name="Montgomery K."/>
            <person name="Kucherlapati R."/>
            <person name="Rahme L.G."/>
            <person name="Ausubel F.M."/>
        </authorList>
    </citation>
    <scope>NUCLEOTIDE SEQUENCE [LARGE SCALE GENOMIC DNA]</scope>
    <source>
        <strain>UCBPP-PA14</strain>
    </source>
</reference>
<sequence>MAEAQKTVRTLTGRVVSDKMDKTVTVLIERRVKHPIYGKYVKRSTKLHAHDESNQCRIGDLVTIRETRPLAKTKAWTLVDIVERAVEV</sequence>
<keyword id="KW-0687">Ribonucleoprotein</keyword>
<keyword id="KW-0689">Ribosomal protein</keyword>
<keyword id="KW-0694">RNA-binding</keyword>
<keyword id="KW-0699">rRNA-binding</keyword>
<feature type="chain" id="PRO_1000054999" description="Small ribosomal subunit protein uS17">
    <location>
        <begin position="1"/>
        <end position="88"/>
    </location>
</feature>
<comment type="function">
    <text evidence="1">One of the primary rRNA binding proteins, it binds specifically to the 5'-end of 16S ribosomal RNA.</text>
</comment>
<comment type="subunit">
    <text evidence="1">Part of the 30S ribosomal subunit.</text>
</comment>
<comment type="similarity">
    <text evidence="1">Belongs to the universal ribosomal protein uS17 family.</text>
</comment>
<proteinExistence type="inferred from homology"/>
<accession>Q02T71</accession>
<gene>
    <name evidence="1" type="primary">rpsQ</name>
    <name type="ordered locus">PA14_08940</name>
</gene>
<name>RS17_PSEAB</name>